<name>HNS_HAEIN</name>
<comment type="function">
    <text evidence="2">A DNA-binding protein implicated in transcriptional repression and chromosome organization and compaction. Binds nucleation sites in AT-rich DNA and bridges them, forming higher-order nucleoprotein complexes and condensing the chromosome. As many horizontally transferred genes are AT-rich, it plays a central role in silencing foreign genes. A subset of genes are repressed by H-NS in association with other proteins (By similarity).</text>
</comment>
<comment type="subunit">
    <text evidence="2">Homodimer that oligomerizes on DNA into higher-order complexes that form bridges between disparate regions of DNA compacting it.</text>
</comment>
<comment type="subcellular location">
    <subcellularLocation>
        <location evidence="2">Cytoplasm</location>
        <location evidence="2">Nucleoid</location>
    </subcellularLocation>
</comment>
<comment type="similarity">
    <text evidence="4">Belongs to the histone-like protein H-NS family.</text>
</comment>
<accession>P43841</accession>
<gene>
    <name type="primary">hns</name>
    <name type="ordered locus">HI_1587</name>
</gene>
<organism>
    <name type="scientific">Haemophilus influenzae (strain ATCC 51907 / DSM 11121 / KW20 / Rd)</name>
    <dbReference type="NCBI Taxonomy" id="71421"/>
    <lineage>
        <taxon>Bacteria</taxon>
        <taxon>Pseudomonadati</taxon>
        <taxon>Pseudomonadota</taxon>
        <taxon>Gammaproteobacteria</taxon>
        <taxon>Pasteurellales</taxon>
        <taxon>Pasteurellaceae</taxon>
        <taxon>Haemophilus</taxon>
    </lineage>
</organism>
<protein>
    <recommendedName>
        <fullName>DNA-binding protein H-NS homolog</fullName>
    </recommendedName>
</protein>
<evidence type="ECO:0000250" key="1">
    <source>
        <dbReference type="UniProtKB" id="P0A1S2"/>
    </source>
</evidence>
<evidence type="ECO:0000250" key="2">
    <source>
        <dbReference type="UniProtKB" id="P0ACF8"/>
    </source>
</evidence>
<evidence type="ECO:0000256" key="3">
    <source>
        <dbReference type="SAM" id="MobiDB-lite"/>
    </source>
</evidence>
<evidence type="ECO:0000305" key="4"/>
<feature type="chain" id="PRO_0000168506" description="DNA-binding protein H-NS homolog">
    <location>
        <begin position="1"/>
        <end position="134"/>
    </location>
</feature>
<feature type="DNA-binding region" evidence="1">
    <location>
        <begin position="112"/>
        <end position="117"/>
    </location>
</feature>
<feature type="region of interest" description="Disordered" evidence="3">
    <location>
        <begin position="106"/>
        <end position="134"/>
    </location>
</feature>
<reference key="1">
    <citation type="journal article" date="1995" name="Science">
        <title>Whole-genome random sequencing and assembly of Haemophilus influenzae Rd.</title>
        <authorList>
            <person name="Fleischmann R.D."/>
            <person name="Adams M.D."/>
            <person name="White O."/>
            <person name="Clayton R.A."/>
            <person name="Kirkness E.F."/>
            <person name="Kerlavage A.R."/>
            <person name="Bult C.J."/>
            <person name="Tomb J.-F."/>
            <person name="Dougherty B.A."/>
            <person name="Merrick J.M."/>
            <person name="McKenney K."/>
            <person name="Sutton G.G."/>
            <person name="FitzHugh W."/>
            <person name="Fields C.A."/>
            <person name="Gocayne J.D."/>
            <person name="Scott J.D."/>
            <person name="Shirley R."/>
            <person name="Liu L.-I."/>
            <person name="Glodek A."/>
            <person name="Kelley J.M."/>
            <person name="Weidman J.F."/>
            <person name="Phillips C.A."/>
            <person name="Spriggs T."/>
            <person name="Hedblom E."/>
            <person name="Cotton M.D."/>
            <person name="Utterback T.R."/>
            <person name="Hanna M.C."/>
            <person name="Nguyen D.T."/>
            <person name="Saudek D.M."/>
            <person name="Brandon R.C."/>
            <person name="Fine L.D."/>
            <person name="Fritchman J.L."/>
            <person name="Fuhrmann J.L."/>
            <person name="Geoghagen N.S.M."/>
            <person name="Gnehm C.L."/>
            <person name="McDonald L.A."/>
            <person name="Small K.V."/>
            <person name="Fraser C.M."/>
            <person name="Smith H.O."/>
            <person name="Venter J.C."/>
        </authorList>
    </citation>
    <scope>NUCLEOTIDE SEQUENCE [LARGE SCALE GENOMIC DNA]</scope>
    <source>
        <strain>ATCC 51907 / DSM 11121 / KW20 / Rd</strain>
    </source>
</reference>
<keyword id="KW-0963">Cytoplasm</keyword>
<keyword id="KW-0238">DNA-binding</keyword>
<keyword id="KW-1185">Reference proteome</keyword>
<keyword id="KW-0678">Repressor</keyword>
<keyword id="KW-0804">Transcription</keyword>
<keyword id="KW-0805">Transcription regulation</keyword>
<dbReference type="EMBL" id="L42023">
    <property type="protein sequence ID" value="AAC23235.1"/>
    <property type="molecule type" value="Genomic_DNA"/>
</dbReference>
<dbReference type="PIR" id="D64131">
    <property type="entry name" value="D64131"/>
</dbReference>
<dbReference type="RefSeq" id="NP_439732.1">
    <property type="nucleotide sequence ID" value="NC_000907.1"/>
</dbReference>
<dbReference type="SMR" id="P43841"/>
<dbReference type="STRING" id="71421.HI_1587"/>
<dbReference type="EnsemblBacteria" id="AAC23235">
    <property type="protein sequence ID" value="AAC23235"/>
    <property type="gene ID" value="HI_1587"/>
</dbReference>
<dbReference type="KEGG" id="hin:HI_1587"/>
<dbReference type="PATRIC" id="fig|71421.8.peg.1661"/>
<dbReference type="eggNOG" id="COG2916">
    <property type="taxonomic scope" value="Bacteria"/>
</dbReference>
<dbReference type="HOGENOM" id="CLU_117503_0_0_6"/>
<dbReference type="OrthoDB" id="6088948at2"/>
<dbReference type="PhylomeDB" id="P43841"/>
<dbReference type="BioCyc" id="HINF71421:G1GJ1-1603-MONOMER"/>
<dbReference type="Proteomes" id="UP000000579">
    <property type="component" value="Chromosome"/>
</dbReference>
<dbReference type="GO" id="GO:0005829">
    <property type="term" value="C:cytosol"/>
    <property type="evidence" value="ECO:0000318"/>
    <property type="project" value="GO_Central"/>
</dbReference>
<dbReference type="GO" id="GO:0009295">
    <property type="term" value="C:nucleoid"/>
    <property type="evidence" value="ECO:0007669"/>
    <property type="project" value="UniProtKB-SubCell"/>
</dbReference>
<dbReference type="GO" id="GO:0032993">
    <property type="term" value="C:protein-DNA complex"/>
    <property type="evidence" value="ECO:0000318"/>
    <property type="project" value="GO_Central"/>
</dbReference>
<dbReference type="GO" id="GO:0003681">
    <property type="term" value="F:bent DNA binding"/>
    <property type="evidence" value="ECO:0000318"/>
    <property type="project" value="GO_Central"/>
</dbReference>
<dbReference type="GO" id="GO:0001217">
    <property type="term" value="F:DNA-binding transcription repressor activity"/>
    <property type="evidence" value="ECO:0000318"/>
    <property type="project" value="GO_Central"/>
</dbReference>
<dbReference type="GO" id="GO:0003680">
    <property type="term" value="F:minor groove of adenine-thymine-rich DNA binding"/>
    <property type="evidence" value="ECO:0000318"/>
    <property type="project" value="GO_Central"/>
</dbReference>
<dbReference type="GO" id="GO:0046983">
    <property type="term" value="F:protein dimerization activity"/>
    <property type="evidence" value="ECO:0007669"/>
    <property type="project" value="InterPro"/>
</dbReference>
<dbReference type="GO" id="GO:0030527">
    <property type="term" value="F:structural constituent of chromatin"/>
    <property type="evidence" value="ECO:0007669"/>
    <property type="project" value="InterPro"/>
</dbReference>
<dbReference type="GO" id="GO:0000976">
    <property type="term" value="F:transcription cis-regulatory region binding"/>
    <property type="evidence" value="ECO:0000318"/>
    <property type="project" value="GO_Central"/>
</dbReference>
<dbReference type="FunFam" id="1.10.287.1050:FF:000002">
    <property type="entry name" value="DNA-binding protein"/>
    <property type="match status" value="1"/>
</dbReference>
<dbReference type="FunFam" id="4.10.430.10:FF:000001">
    <property type="entry name" value="DNA-binding protein"/>
    <property type="match status" value="1"/>
</dbReference>
<dbReference type="Gene3D" id="1.10.287.1050">
    <property type="entry name" value="H-NS histone-like proteins"/>
    <property type="match status" value="1"/>
</dbReference>
<dbReference type="Gene3D" id="4.10.430.10">
    <property type="entry name" value="Histone-like protein H-NS, C-terminal domain"/>
    <property type="match status" value="1"/>
</dbReference>
<dbReference type="InterPro" id="IPR054180">
    <property type="entry name" value="H-NS-like_N"/>
</dbReference>
<dbReference type="InterPro" id="IPR027444">
    <property type="entry name" value="H-NS_C_dom"/>
</dbReference>
<dbReference type="InterPro" id="IPR037150">
    <property type="entry name" value="H-NS_C_dom_sf"/>
</dbReference>
<dbReference type="InterPro" id="IPR001801">
    <property type="entry name" value="Histone_HNS"/>
</dbReference>
<dbReference type="InterPro" id="IPR027454">
    <property type="entry name" value="Histone_HNS_N"/>
</dbReference>
<dbReference type="PANTHER" id="PTHR38097">
    <property type="match status" value="1"/>
</dbReference>
<dbReference type="PANTHER" id="PTHR38097:SF2">
    <property type="entry name" value="DNA-BINDING PROTEIN STPA"/>
    <property type="match status" value="1"/>
</dbReference>
<dbReference type="Pfam" id="PF00816">
    <property type="entry name" value="Histone_HNS"/>
    <property type="match status" value="1"/>
</dbReference>
<dbReference type="Pfam" id="PF22470">
    <property type="entry name" value="Histone_HNS_N"/>
    <property type="match status" value="1"/>
</dbReference>
<dbReference type="PIRSF" id="PIRSF002096">
    <property type="entry name" value="HnS"/>
    <property type="match status" value="1"/>
</dbReference>
<dbReference type="SMART" id="SM00528">
    <property type="entry name" value="HNS"/>
    <property type="match status" value="1"/>
</dbReference>
<dbReference type="SUPFAM" id="SSF81273">
    <property type="entry name" value="H-NS histone-like proteins"/>
    <property type="match status" value="2"/>
</dbReference>
<sequence length="134" mass="15328">MNELVRGLTNLRSLRAAVRELTLEQAENALEKLQTAIEEKRANEAELIKAETERKERLAKYKELMEKEGITPEELHEIFGTKTVSIRAKRAPRPAKYAFIDENGEHKTWTGQGRTPRPIQNALNKGKSLSDFEI</sequence>
<proteinExistence type="inferred from homology"/>